<comment type="function">
    <text evidence="1">One of the components of the core complex of photosystem II (PSII). PSII is a light-driven water:plastoquinone oxidoreductase that uses light energy to abstract electrons from H(2)O, generating O(2) and a proton gradient subsequently used for ATP formation. It consists of a core antenna complex that captures photons, and an electron transfer chain that converts photonic excitation into a charge separation.</text>
</comment>
<comment type="subunit">
    <text evidence="1">PSII is composed of 1 copy each of membrane proteins PsbA, PsbB, PsbC, PsbD, PsbE, PsbF, PsbH, PsbI, PsbJ, PsbK, PsbL, PsbM, PsbT, PsbX, PsbY, PsbZ, Psb30/Ycf12, at least 3 peripheral proteins of the oxygen-evolving complex and a large number of cofactors. It forms dimeric complexes.</text>
</comment>
<comment type="subcellular location">
    <subcellularLocation>
        <location evidence="1">Plastid</location>
        <location evidence="1">Chloroplast thylakoid membrane</location>
        <topology evidence="1">Single-pass membrane protein</topology>
    </subcellularLocation>
</comment>
<comment type="similarity">
    <text evidence="1">Belongs to the PsbK family.</text>
</comment>
<gene>
    <name evidence="1" type="primary">psbK</name>
</gene>
<reference key="1">
    <citation type="journal article" date="1999" name="Proc. Natl. Acad. Sci. U.S.A.">
        <title>The complete chloroplast DNA sequence of the green alga Nephroselmis olivacea: insights into the architecture of ancestral chloroplast genomes.</title>
        <authorList>
            <person name="Turmel M."/>
            <person name="Otis C."/>
            <person name="Lemieux C."/>
        </authorList>
    </citation>
    <scope>NUCLEOTIDE SEQUENCE [LARGE SCALE GENOMIC DNA]</scope>
    <source>
        <strain>NIES-484 / S-N-5-8</strain>
    </source>
</reference>
<name>PSBK_NEPOL</name>
<evidence type="ECO:0000255" key="1">
    <source>
        <dbReference type="HAMAP-Rule" id="MF_00441"/>
    </source>
</evidence>
<organism>
    <name type="scientific">Nephroselmis olivacea</name>
    <name type="common">Green alga</name>
    <dbReference type="NCBI Taxonomy" id="31312"/>
    <lineage>
        <taxon>Eukaryota</taxon>
        <taxon>Viridiplantae</taxon>
        <taxon>Chlorophyta</taxon>
        <taxon>Nephroselmidophyceae</taxon>
        <taxon>Nephroselmidales</taxon>
        <taxon>Nephroselmidaceae</taxon>
        <taxon>Nephroselmis</taxon>
    </lineage>
</organism>
<sequence>MSTLPILLATLPEAYLPFRPLVDVLPSIPVLFLLLAFVWQAAVSFR</sequence>
<dbReference type="EMBL" id="AF137379">
    <property type="protein sequence ID" value="AAD54829.1"/>
    <property type="molecule type" value="Genomic_DNA"/>
</dbReference>
<dbReference type="RefSeq" id="NP_050858.1">
    <property type="nucleotide sequence ID" value="NC_000927.1"/>
</dbReference>
<dbReference type="SMR" id="Q9TKY7"/>
<dbReference type="GeneID" id="802048"/>
<dbReference type="GO" id="GO:0009535">
    <property type="term" value="C:chloroplast thylakoid membrane"/>
    <property type="evidence" value="ECO:0007669"/>
    <property type="project" value="UniProtKB-SubCell"/>
</dbReference>
<dbReference type="GO" id="GO:0009539">
    <property type="term" value="C:photosystem II reaction center"/>
    <property type="evidence" value="ECO:0007669"/>
    <property type="project" value="InterPro"/>
</dbReference>
<dbReference type="GO" id="GO:0015979">
    <property type="term" value="P:photosynthesis"/>
    <property type="evidence" value="ECO:0007669"/>
    <property type="project" value="UniProtKB-UniRule"/>
</dbReference>
<dbReference type="HAMAP" id="MF_00441">
    <property type="entry name" value="PSII_PsbK"/>
    <property type="match status" value="1"/>
</dbReference>
<dbReference type="InterPro" id="IPR003687">
    <property type="entry name" value="PSII_PsbK"/>
</dbReference>
<dbReference type="InterPro" id="IPR037270">
    <property type="entry name" value="PSII_PsbK_sf"/>
</dbReference>
<dbReference type="NCBIfam" id="NF002715">
    <property type="entry name" value="PRK02553.1"/>
    <property type="match status" value="1"/>
</dbReference>
<dbReference type="PANTHER" id="PTHR35325">
    <property type="match status" value="1"/>
</dbReference>
<dbReference type="PANTHER" id="PTHR35325:SF1">
    <property type="entry name" value="PHOTOSYSTEM II REACTION CENTER PROTEIN K"/>
    <property type="match status" value="1"/>
</dbReference>
<dbReference type="Pfam" id="PF02533">
    <property type="entry name" value="PsbK"/>
    <property type="match status" value="1"/>
</dbReference>
<dbReference type="SUPFAM" id="SSF161037">
    <property type="entry name" value="Photosystem II reaction center protein K, PsbK"/>
    <property type="match status" value="1"/>
</dbReference>
<feature type="propeptide" id="PRO_0000029491" evidence="1">
    <location>
        <begin position="1"/>
        <end position="9"/>
    </location>
</feature>
<feature type="chain" id="PRO_0000029492" description="Photosystem II reaction center protein K" evidence="1">
    <location>
        <begin position="10"/>
        <end position="46"/>
    </location>
</feature>
<feature type="transmembrane region" description="Helical" evidence="1">
    <location>
        <begin position="25"/>
        <end position="45"/>
    </location>
</feature>
<keyword id="KW-0150">Chloroplast</keyword>
<keyword id="KW-0472">Membrane</keyword>
<keyword id="KW-0602">Photosynthesis</keyword>
<keyword id="KW-0604">Photosystem II</keyword>
<keyword id="KW-0934">Plastid</keyword>
<keyword id="KW-0674">Reaction center</keyword>
<keyword id="KW-0793">Thylakoid</keyword>
<keyword id="KW-0812">Transmembrane</keyword>
<keyword id="KW-1133">Transmembrane helix</keyword>
<accession>Q9TKY7</accession>
<proteinExistence type="inferred from homology"/>
<geneLocation type="chloroplast"/>
<protein>
    <recommendedName>
        <fullName evidence="1">Photosystem II reaction center protein K</fullName>
        <shortName evidence="1">PSII-K</shortName>
    </recommendedName>
</protein>